<protein>
    <recommendedName>
        <fullName evidence="1">Glutamate--tRNA ligase</fullName>
        <ecNumber evidence="1">6.1.1.17</ecNumber>
    </recommendedName>
    <alternativeName>
        <fullName evidence="1">Glutamyl-tRNA synthetase</fullName>
        <shortName evidence="1">GluRS</shortName>
    </alternativeName>
</protein>
<feature type="chain" id="PRO_1000001881" description="Glutamate--tRNA ligase">
    <location>
        <begin position="1"/>
        <end position="469"/>
    </location>
</feature>
<feature type="region of interest" description="Disordered" evidence="2">
    <location>
        <begin position="118"/>
        <end position="139"/>
    </location>
</feature>
<feature type="short sequence motif" description="'HIGH' region" evidence="1">
    <location>
        <begin position="11"/>
        <end position="21"/>
    </location>
</feature>
<feature type="short sequence motif" description="'KMSKS' region" evidence="1">
    <location>
        <begin position="243"/>
        <end position="247"/>
    </location>
</feature>
<feature type="compositionally biased region" description="Basic and acidic residues" evidence="2">
    <location>
        <begin position="118"/>
        <end position="131"/>
    </location>
</feature>
<feature type="binding site" evidence="1">
    <location>
        <position position="246"/>
    </location>
    <ligand>
        <name>ATP</name>
        <dbReference type="ChEBI" id="CHEBI:30616"/>
    </ligand>
</feature>
<evidence type="ECO:0000255" key="1">
    <source>
        <dbReference type="HAMAP-Rule" id="MF_00022"/>
    </source>
</evidence>
<evidence type="ECO:0000256" key="2">
    <source>
        <dbReference type="SAM" id="MobiDB-lite"/>
    </source>
</evidence>
<gene>
    <name evidence="1" type="primary">gltX</name>
    <name type="ordered locus">BMA10247_1376</name>
</gene>
<organism>
    <name type="scientific">Burkholderia mallei (strain NCTC 10247)</name>
    <dbReference type="NCBI Taxonomy" id="320389"/>
    <lineage>
        <taxon>Bacteria</taxon>
        <taxon>Pseudomonadati</taxon>
        <taxon>Pseudomonadota</taxon>
        <taxon>Betaproteobacteria</taxon>
        <taxon>Burkholderiales</taxon>
        <taxon>Burkholderiaceae</taxon>
        <taxon>Burkholderia</taxon>
        <taxon>pseudomallei group</taxon>
    </lineage>
</organism>
<dbReference type="EC" id="6.1.1.17" evidence="1"/>
<dbReference type="EMBL" id="CP000548">
    <property type="protein sequence ID" value="ABO05038.1"/>
    <property type="molecule type" value="Genomic_DNA"/>
</dbReference>
<dbReference type="RefSeq" id="WP_004197094.1">
    <property type="nucleotide sequence ID" value="NZ_CP007802.1"/>
</dbReference>
<dbReference type="SMR" id="A3MKY8"/>
<dbReference type="GeneID" id="92979324"/>
<dbReference type="KEGG" id="bmaz:BM44_1757"/>
<dbReference type="KEGG" id="bmn:BMA10247_1376"/>
<dbReference type="PATRIC" id="fig|320389.8.peg.1968"/>
<dbReference type="GO" id="GO:0005829">
    <property type="term" value="C:cytosol"/>
    <property type="evidence" value="ECO:0007669"/>
    <property type="project" value="TreeGrafter"/>
</dbReference>
<dbReference type="GO" id="GO:0005524">
    <property type="term" value="F:ATP binding"/>
    <property type="evidence" value="ECO:0007669"/>
    <property type="project" value="UniProtKB-UniRule"/>
</dbReference>
<dbReference type="GO" id="GO:0004818">
    <property type="term" value="F:glutamate-tRNA ligase activity"/>
    <property type="evidence" value="ECO:0007669"/>
    <property type="project" value="UniProtKB-UniRule"/>
</dbReference>
<dbReference type="GO" id="GO:0000049">
    <property type="term" value="F:tRNA binding"/>
    <property type="evidence" value="ECO:0007669"/>
    <property type="project" value="InterPro"/>
</dbReference>
<dbReference type="GO" id="GO:0008270">
    <property type="term" value="F:zinc ion binding"/>
    <property type="evidence" value="ECO:0007669"/>
    <property type="project" value="InterPro"/>
</dbReference>
<dbReference type="GO" id="GO:0006424">
    <property type="term" value="P:glutamyl-tRNA aminoacylation"/>
    <property type="evidence" value="ECO:0007669"/>
    <property type="project" value="UniProtKB-UniRule"/>
</dbReference>
<dbReference type="CDD" id="cd00808">
    <property type="entry name" value="GluRS_core"/>
    <property type="match status" value="1"/>
</dbReference>
<dbReference type="FunFam" id="3.40.50.620:FF:000007">
    <property type="entry name" value="Glutamate--tRNA ligase"/>
    <property type="match status" value="1"/>
</dbReference>
<dbReference type="Gene3D" id="1.10.10.350">
    <property type="match status" value="1"/>
</dbReference>
<dbReference type="Gene3D" id="1.10.8.70">
    <property type="entry name" value="Glutamate-tRNA synthetase, class I, anticodon-binding domain 1"/>
    <property type="match status" value="1"/>
</dbReference>
<dbReference type="Gene3D" id="3.40.50.620">
    <property type="entry name" value="HUPs"/>
    <property type="match status" value="1"/>
</dbReference>
<dbReference type="HAMAP" id="MF_00022">
    <property type="entry name" value="Glu_tRNA_synth_type1"/>
    <property type="match status" value="1"/>
</dbReference>
<dbReference type="InterPro" id="IPR045462">
    <property type="entry name" value="aa-tRNA-synth_I_cd-bd"/>
</dbReference>
<dbReference type="InterPro" id="IPR020751">
    <property type="entry name" value="aa-tRNA-synth_I_codon-bd_sub2"/>
</dbReference>
<dbReference type="InterPro" id="IPR001412">
    <property type="entry name" value="aa-tRNA-synth_I_CS"/>
</dbReference>
<dbReference type="InterPro" id="IPR008925">
    <property type="entry name" value="aa_tRNA-synth_I_cd-bd_sf"/>
</dbReference>
<dbReference type="InterPro" id="IPR004527">
    <property type="entry name" value="Glu-tRNA-ligase_bac/mito"/>
</dbReference>
<dbReference type="InterPro" id="IPR020752">
    <property type="entry name" value="Glu-tRNA-synth_I_codon-bd_sub1"/>
</dbReference>
<dbReference type="InterPro" id="IPR000924">
    <property type="entry name" value="Glu/Gln-tRNA-synth"/>
</dbReference>
<dbReference type="InterPro" id="IPR020058">
    <property type="entry name" value="Glu/Gln-tRNA-synth_Ib_cat-dom"/>
</dbReference>
<dbReference type="InterPro" id="IPR049940">
    <property type="entry name" value="GluQ/Sye"/>
</dbReference>
<dbReference type="InterPro" id="IPR033910">
    <property type="entry name" value="GluRS_core"/>
</dbReference>
<dbReference type="InterPro" id="IPR014729">
    <property type="entry name" value="Rossmann-like_a/b/a_fold"/>
</dbReference>
<dbReference type="NCBIfam" id="TIGR00464">
    <property type="entry name" value="gltX_bact"/>
    <property type="match status" value="1"/>
</dbReference>
<dbReference type="PANTHER" id="PTHR43311">
    <property type="entry name" value="GLUTAMATE--TRNA LIGASE"/>
    <property type="match status" value="1"/>
</dbReference>
<dbReference type="PANTHER" id="PTHR43311:SF2">
    <property type="entry name" value="GLUTAMATE--TRNA LIGASE, MITOCHONDRIAL-RELATED"/>
    <property type="match status" value="1"/>
</dbReference>
<dbReference type="Pfam" id="PF19269">
    <property type="entry name" value="Anticodon_2"/>
    <property type="match status" value="1"/>
</dbReference>
<dbReference type="Pfam" id="PF00749">
    <property type="entry name" value="tRNA-synt_1c"/>
    <property type="match status" value="1"/>
</dbReference>
<dbReference type="PRINTS" id="PR00987">
    <property type="entry name" value="TRNASYNTHGLU"/>
</dbReference>
<dbReference type="SUPFAM" id="SSF48163">
    <property type="entry name" value="An anticodon-binding domain of class I aminoacyl-tRNA synthetases"/>
    <property type="match status" value="1"/>
</dbReference>
<dbReference type="SUPFAM" id="SSF52374">
    <property type="entry name" value="Nucleotidylyl transferase"/>
    <property type="match status" value="1"/>
</dbReference>
<dbReference type="PROSITE" id="PS00178">
    <property type="entry name" value="AA_TRNA_LIGASE_I"/>
    <property type="match status" value="1"/>
</dbReference>
<accession>A3MKY8</accession>
<comment type="function">
    <text evidence="1">Catalyzes the attachment of glutamate to tRNA(Glu) in a two-step reaction: glutamate is first activated by ATP to form Glu-AMP and then transferred to the acceptor end of tRNA(Glu).</text>
</comment>
<comment type="catalytic activity">
    <reaction evidence="1">
        <text>tRNA(Glu) + L-glutamate + ATP = L-glutamyl-tRNA(Glu) + AMP + diphosphate</text>
        <dbReference type="Rhea" id="RHEA:23540"/>
        <dbReference type="Rhea" id="RHEA-COMP:9663"/>
        <dbReference type="Rhea" id="RHEA-COMP:9680"/>
        <dbReference type="ChEBI" id="CHEBI:29985"/>
        <dbReference type="ChEBI" id="CHEBI:30616"/>
        <dbReference type="ChEBI" id="CHEBI:33019"/>
        <dbReference type="ChEBI" id="CHEBI:78442"/>
        <dbReference type="ChEBI" id="CHEBI:78520"/>
        <dbReference type="ChEBI" id="CHEBI:456215"/>
        <dbReference type="EC" id="6.1.1.17"/>
    </reaction>
</comment>
<comment type="subunit">
    <text evidence="1">Monomer.</text>
</comment>
<comment type="subcellular location">
    <subcellularLocation>
        <location evidence="1">Cytoplasm</location>
    </subcellularLocation>
</comment>
<comment type="similarity">
    <text evidence="1">Belongs to the class-I aminoacyl-tRNA synthetase family. Glutamate--tRNA ligase type 1 subfamily.</text>
</comment>
<keyword id="KW-0030">Aminoacyl-tRNA synthetase</keyword>
<keyword id="KW-0067">ATP-binding</keyword>
<keyword id="KW-0963">Cytoplasm</keyword>
<keyword id="KW-0436">Ligase</keyword>
<keyword id="KW-0547">Nucleotide-binding</keyword>
<keyword id="KW-0648">Protein biosynthesis</keyword>
<sequence length="469" mass="52193">MTRPVRTRFAPSPTGFIHLGNIRSALYPWAFARKMKGTFVLRIEDTDLERSTEASVDAILEGMAWLGLDYDEGPYYQMQRMDRYREVLAQMLEKDLVYPCYMSTEELDALRERQRAAGEKPRYDGTWRPEPGKVLPEPPAGVTPVLRFRNPLTGSVVWDDAVKGRVEISNEELDDLVIARPDGTPTYNFCVVVDDLDMGITHVIRGDDHVNNTPRQINILRALGGEVPVYAHLPTVLNEQGEKMSKRHGAMSVMGYRDAGYLPEAVLNYLARLGWSHGDAEIFSREQFVEWFDLEHLGKSPAQYDHNKLNWLNNHYIKEADDARLAELAKPFFAALGIDADTIARGPDLVGVMGLMKDRASTVKEIAENSTMFYRSPAPDAQALAQHVTDAVRPALAEFAAALKTAEWTKEAIAAALKAVLGAHKLKMPQLAMPVRLLVAGTTHTPSIDAVLLLFGRDVVVSRLAAALA</sequence>
<name>SYE_BURM7</name>
<reference key="1">
    <citation type="journal article" date="2010" name="Genome Biol. Evol.">
        <title>Continuing evolution of Burkholderia mallei through genome reduction and large-scale rearrangements.</title>
        <authorList>
            <person name="Losada L."/>
            <person name="Ronning C.M."/>
            <person name="DeShazer D."/>
            <person name="Woods D."/>
            <person name="Fedorova N."/>
            <person name="Kim H.S."/>
            <person name="Shabalina S.A."/>
            <person name="Pearson T.R."/>
            <person name="Brinkac L."/>
            <person name="Tan P."/>
            <person name="Nandi T."/>
            <person name="Crabtree J."/>
            <person name="Badger J."/>
            <person name="Beckstrom-Sternberg S."/>
            <person name="Saqib M."/>
            <person name="Schutzer S.E."/>
            <person name="Keim P."/>
            <person name="Nierman W.C."/>
        </authorList>
    </citation>
    <scope>NUCLEOTIDE SEQUENCE [LARGE SCALE GENOMIC DNA]</scope>
    <source>
        <strain>NCTC 10247</strain>
    </source>
</reference>
<proteinExistence type="inferred from homology"/>